<proteinExistence type="evidence at protein level"/>
<organism>
    <name type="scientific">Elizabethkingia meningoseptica</name>
    <name type="common">Chryseobacterium meningosepticum</name>
    <dbReference type="NCBI Taxonomy" id="238"/>
    <lineage>
        <taxon>Bacteria</taxon>
        <taxon>Pseudomonadati</taxon>
        <taxon>Bacteroidota</taxon>
        <taxon>Flavobacteriia</taxon>
        <taxon>Flavobacteriales</taxon>
        <taxon>Weeksellaceae</taxon>
        <taxon>Elizabethkingia</taxon>
    </lineage>
</organism>
<gene>
    <name type="primary">fpaP</name>
</gene>
<dbReference type="EC" id="3.4.11.5"/>
<dbReference type="EMBL" id="D83254">
    <property type="protein sequence ID" value="BAA19688.1"/>
    <property type="molecule type" value="Genomic_DNA"/>
</dbReference>
<dbReference type="SMR" id="O05420"/>
<dbReference type="STRING" id="238.BBD35_02715"/>
<dbReference type="ESTHER" id="flame-pamp">
    <property type="family name" value="Proline_iminopeptidase"/>
</dbReference>
<dbReference type="eggNOG" id="COG2267">
    <property type="taxonomic scope" value="Bacteria"/>
</dbReference>
<dbReference type="GO" id="GO:0004177">
    <property type="term" value="F:aminopeptidase activity"/>
    <property type="evidence" value="ECO:0007669"/>
    <property type="project" value="UniProtKB-KW"/>
</dbReference>
<dbReference type="GO" id="GO:0006508">
    <property type="term" value="P:proteolysis"/>
    <property type="evidence" value="ECO:0007669"/>
    <property type="project" value="UniProtKB-KW"/>
</dbReference>
<dbReference type="Gene3D" id="3.40.50.1820">
    <property type="entry name" value="alpha/beta hydrolase"/>
    <property type="match status" value="1"/>
</dbReference>
<dbReference type="InterPro" id="IPR000073">
    <property type="entry name" value="AB_hydrolase_1"/>
</dbReference>
<dbReference type="InterPro" id="IPR029058">
    <property type="entry name" value="AB_hydrolase_fold"/>
</dbReference>
<dbReference type="InterPro" id="IPR050266">
    <property type="entry name" value="AB_hydrolase_sf"/>
</dbReference>
<dbReference type="InterPro" id="IPR002410">
    <property type="entry name" value="Peptidase_S33"/>
</dbReference>
<dbReference type="InterPro" id="IPR005945">
    <property type="entry name" value="Pro_imino_pep"/>
</dbReference>
<dbReference type="NCBIfam" id="TIGR01250">
    <property type="entry name" value="pro_imino_pep_2"/>
    <property type="match status" value="1"/>
</dbReference>
<dbReference type="PANTHER" id="PTHR43798">
    <property type="entry name" value="MONOACYLGLYCEROL LIPASE"/>
    <property type="match status" value="1"/>
</dbReference>
<dbReference type="Pfam" id="PF00561">
    <property type="entry name" value="Abhydrolase_1"/>
    <property type="match status" value="1"/>
</dbReference>
<dbReference type="PIRSF" id="PIRSF005539">
    <property type="entry name" value="Pept_S33_TRI_F1"/>
    <property type="match status" value="1"/>
</dbReference>
<dbReference type="PRINTS" id="PR00793">
    <property type="entry name" value="PROAMNOPTASE"/>
</dbReference>
<dbReference type="SUPFAM" id="SSF53474">
    <property type="entry name" value="alpha/beta-Hydrolases"/>
    <property type="match status" value="1"/>
</dbReference>
<sequence>MIPITTPVGNFKVWTKRFGTNPKIKVLLLHGGPAMTHEYMECFETFFQREGFEFYEYDQLGSYYSDQPTDEKLWNIDRFVDEVEQVRKAIHADKENFYVLGNSWGGILAMEYALKYQQNLKGLIVANMMASAPEYVKYAEVLSKQMKPEVLAEVRAIEAKKDYANPRYTELLFPNYYAQHICRLKEWPDALNRSLKHVNSTVYTLMQGPSELGMSSDARLAKWDIKNRLHEIATPTLMIGARYDTMDPKAMEEQSKLVQKGRYLYCPNGSHLAMWDDQKVFMDGVIKFIKDVDTKSFN</sequence>
<comment type="function">
    <text evidence="4">Releases the N-terminal proline from various substrates. Cleaves specifically Pro-betaNA and small peptides containing proline at the amino terminal. No activity against hydroxyproline-betaNA.</text>
</comment>
<comment type="catalytic activity">
    <reaction evidence="4">
        <text>Release of N-terminal proline from a peptide.</text>
        <dbReference type="EC" id="3.4.11.5"/>
    </reaction>
</comment>
<comment type="biophysicochemical properties">
    <phDependence>
        <text evidence="4">Optimum pH 8.0.</text>
    </phDependence>
    <temperatureDependence>
        <text evidence="4">Maximum activity at 42 degrees Celsius. Stable at temperatures up to 44 degrees Celsius, showing 50% of activity after incubation at this temperature for 15 minutes (at pH 8.0).</text>
    </temperatureDependence>
</comment>
<comment type="subunit">
    <text evidence="4">Monomer.</text>
</comment>
<comment type="similarity">
    <text evidence="3">Belongs to the peptidase S33 family.</text>
</comment>
<accession>O05420</accession>
<feature type="chain" id="PRO_0000406320" description="Proline iminopeptidase">
    <location>
        <begin position="1"/>
        <end position="298"/>
    </location>
</feature>
<feature type="domain" description="AB hydrolase-1" evidence="3">
    <location>
        <begin position="26"/>
        <end position="277"/>
    </location>
</feature>
<feature type="active site" description="Nucleophile" evidence="2">
    <location>
        <position position="103"/>
    </location>
</feature>
<feature type="active site" evidence="1">
    <location>
        <position position="244"/>
    </location>
</feature>
<feature type="active site" description="Proton donor" evidence="2">
    <location>
        <position position="271"/>
    </location>
</feature>
<reference evidence="6 7" key="1">
    <citation type="journal article" date="1996" name="Arch. Biochem. Biophys.">
        <title>Prolyl aminopeptidase gene from Flavobacterium meningosepticum: cloning, purification of the expressed enzyme, and analysis of its sequence.</title>
        <authorList>
            <person name="Kitazono A."/>
            <person name="Kabashima T."/>
            <person name="Huang H.S."/>
            <person name="Ito K."/>
            <person name="Yoshimoto T."/>
        </authorList>
    </citation>
    <scope>NUCLEOTIDE SEQUENCE [GENOMIC DNA]</scope>
    <scope>FUNCTION</scope>
    <scope>CATALYTIC ACTIVITY</scope>
    <scope>BIOPHYSICOCHEMICAL PROPERTIES</scope>
    <scope>SUBUNIT</scope>
</reference>
<keyword id="KW-0031">Aminopeptidase</keyword>
<keyword id="KW-0378">Hydrolase</keyword>
<keyword id="KW-0645">Protease</keyword>
<name>PIP_ELIME</name>
<protein>
    <recommendedName>
        <fullName evidence="2">Proline iminopeptidase</fullName>
        <shortName evidence="2">PIP</shortName>
        <ecNumber>3.4.11.5</ecNumber>
    </recommendedName>
    <alternativeName>
        <fullName evidence="5 7">Prolyl aminopeptidase</fullName>
        <shortName evidence="5">PAP</shortName>
    </alternativeName>
</protein>
<evidence type="ECO:0000250" key="1">
    <source>
        <dbReference type="UniProtKB" id="O32449"/>
    </source>
</evidence>
<evidence type="ECO:0000250" key="2">
    <source>
        <dbReference type="UniProtKB" id="P96084"/>
    </source>
</evidence>
<evidence type="ECO:0000255" key="3"/>
<evidence type="ECO:0000269" key="4">
    <source>
    </source>
</evidence>
<evidence type="ECO:0000303" key="5">
    <source>
    </source>
</evidence>
<evidence type="ECO:0000305" key="6"/>
<evidence type="ECO:0000312" key="7">
    <source>
        <dbReference type="EMBL" id="BAA19688.1"/>
    </source>
</evidence>